<evidence type="ECO:0000250" key="1">
    <source>
        <dbReference type="UniProtKB" id="A0A0A0VBX4"/>
    </source>
</evidence>
<evidence type="ECO:0000250" key="2">
    <source>
        <dbReference type="UniProtKB" id="P0C1W6"/>
    </source>
</evidence>
<evidence type="ECO:0000269" key="3">
    <source>
    </source>
</evidence>
<evidence type="ECO:0000303" key="4">
    <source>
    </source>
</evidence>
<evidence type="ECO:0000305" key="5"/>
<evidence type="ECO:0000305" key="6">
    <source>
    </source>
</evidence>
<feature type="signal peptide" evidence="6">
    <location>
        <begin position="1"/>
        <end position="24"/>
    </location>
</feature>
<feature type="propeptide" id="PRO_0000457364" evidence="6">
    <location>
        <begin position="25"/>
        <end position="45"/>
    </location>
</feature>
<feature type="chain" id="PRO_0000457365" description="Alpha-conotoxin FrXXA 2" evidence="6">
    <location>
        <begin position="46"/>
        <end position="92"/>
    </location>
</feature>
<feature type="disulfide bond" description="Interchain (with C-63)" evidence="1">
    <location>
        <position position="51"/>
    </location>
</feature>
<feature type="disulfide bond" description="Interchain (with C-51)" evidence="1">
    <location>
        <position position="62"/>
    </location>
</feature>
<feature type="disulfide bond" evidence="1">
    <location>
        <begin position="63"/>
        <end position="72"/>
    </location>
</feature>
<feature type="disulfide bond" evidence="1">
    <location>
        <begin position="68"/>
        <end position="80"/>
    </location>
</feature>
<feature type="disulfide bond" evidence="1">
    <location>
        <begin position="73"/>
        <end position="90"/>
    </location>
</feature>
<feature type="disulfide bond" evidence="1">
    <location>
        <begin position="78"/>
        <end position="92"/>
    </location>
</feature>
<feature type="sequence conflict" description="In Ref. 1; AA sequence." evidence="5" ref="1">
    <original>PR</original>
    <variation>ST</variation>
    <location>
        <begin position="53"/>
        <end position="54"/>
    </location>
</feature>
<accession>P0DQX1</accession>
<proteinExistence type="evidence at protein level"/>
<dbReference type="SMR" id="P0DQX1"/>
<dbReference type="GO" id="GO:0005576">
    <property type="term" value="C:extracellular region"/>
    <property type="evidence" value="ECO:0007669"/>
    <property type="project" value="UniProtKB-SubCell"/>
</dbReference>
<dbReference type="GO" id="GO:0035792">
    <property type="term" value="C:host cell postsynaptic membrane"/>
    <property type="evidence" value="ECO:0007669"/>
    <property type="project" value="UniProtKB-KW"/>
</dbReference>
<dbReference type="GO" id="GO:0030550">
    <property type="term" value="F:acetylcholine receptor inhibitor activity"/>
    <property type="evidence" value="ECO:0007669"/>
    <property type="project" value="UniProtKB-KW"/>
</dbReference>
<dbReference type="GO" id="GO:0099106">
    <property type="term" value="F:ion channel regulator activity"/>
    <property type="evidence" value="ECO:0007669"/>
    <property type="project" value="UniProtKB-KW"/>
</dbReference>
<dbReference type="GO" id="GO:0090729">
    <property type="term" value="F:toxin activity"/>
    <property type="evidence" value="ECO:0007669"/>
    <property type="project" value="UniProtKB-KW"/>
</dbReference>
<sequence>MPKLEMMLLVLLILPLPYFDAAGGQAVQGDGHGDGMDRYLQRDDREARITCQPRGRSKWGRCCLTQMCGNYCCYKHGCRCVYHSWRGHGCSC</sequence>
<comment type="function">
    <text evidence="2 3">Alpha-conotoxins act on postsynaptic membranes, they bind to the nicotinic acetylcholine receptors (nAChR) and thus inhibit them. Through its two C-terminal domains, this homodimeric protein would bind to two nAChR allosteric sites, located outside the nAChR C-loop of the principal binding face and at the adjacent binding interface in a clockwise direction (By similarity). Component 4b which seems to correspond to this toxin blocks both neuronal and muscular subtypes: human alpha-7/CHRNA7 (IC(50)=125 nM), human alpha-3-beta-2 (CHRNA3-CHRNB2) (IC(50)=282 nM), human alpha-4-beta-2 (CHRNA4-CHRNB2) (IC(50)=697 nM), mouse adult muscular subtype alpha-1-beta-1-delta-epsilon (CHRNA1-CHRNB1-CHRND-CHRNE) (IC(50)=351 nM), and mouse fetal muscular subtype alpha-1-beta-1-gamma-delta (CHRNA1-CHRNB1-CHRNG-CHRND) (IC(50)=447 nM) (PubMed:35893752). It shows different dissociation rates towards the different subtypes, with a very slow rate towards alpha-7 subtype (almost irreversible), followed by the adult muscular subtype, the fetal muscular subtype, alpha-3-beta-2 and alpha-4-beta-2 (almost entirely reversible within a few minutes of washing) (PubMed:35893752).</text>
</comment>
<comment type="subunit">
    <text evidence="6">Homodimer; disulfide-linked.</text>
</comment>
<comment type="subcellular location">
    <subcellularLocation>
        <location evidence="3">Secreted</location>
    </subcellularLocation>
</comment>
<comment type="tissue specificity">
    <text evidence="6">Expressed by the venom duct.</text>
</comment>
<comment type="domain">
    <text evidence="5">The cysteine framework is XX (C-CC-C-CC-C-C-C-C).</text>
</comment>
<comment type="domain">
    <text evidence="2">Displays a mini-granulin fold, a structure composed of two short, stacked beta-hairpins connected by two parallel disulfide bonds. This newly described fold is derived from the same cysteine connectivity as knottins (ICK fold). The name 'mini-granulin fold' comes from the structural homology with the N-terminal region of the human granulin.</text>
</comment>
<comment type="PTM">
    <text evidence="5">The homodimer contains 10 disulfide bonds.</text>
</comment>
<comment type="similarity">
    <text evidence="5">Belongs to the conotoxin D superfamily.</text>
</comment>
<reference key="1">
    <citation type="journal article" date="2022" name="Toxins">
        <title>A novel dimeric conotoxin, FrXXA, from the vermivorous cone snail Conus fergusoni, of the Eastern Pacific, inhibits nicotinic acetylcholine receptors.</title>
        <authorList>
            <person name="Rodriguez-Ruiz X.C."/>
            <person name="Aguilar M.B."/>
            <person name="Ortiz-Arellano M.A."/>
            <person name="Safavi-Hemami H."/>
            <person name="Lopez-Vera E."/>
        </authorList>
    </citation>
    <scope>NUCLEOTIDE SEQUENCE [MRNA]</scope>
    <scope>PROTEIN SEQUENCE OF 46-71</scope>
    <scope>FUNCTION</scope>
    <scope>SUBCELLULAR LOCATION</scope>
    <scope>SUBUNIT</scope>
    <source>
        <tissue>Venom</tissue>
        <tissue>Venom duct</tissue>
    </source>
</reference>
<keyword id="KW-0008">Acetylcholine receptor inhibiting toxin</keyword>
<keyword id="KW-0903">Direct protein sequencing</keyword>
<keyword id="KW-1015">Disulfide bond</keyword>
<keyword id="KW-0872">Ion channel impairing toxin</keyword>
<keyword id="KW-0528">Neurotoxin</keyword>
<keyword id="KW-0629">Postsynaptic neurotoxin</keyword>
<keyword id="KW-0964">Secreted</keyword>
<keyword id="KW-0732">Signal</keyword>
<keyword id="KW-0800">Toxin</keyword>
<protein>
    <recommendedName>
        <fullName evidence="5">Alpha-conotoxin FrXXA 2</fullName>
    </recommendedName>
    <alternativeName>
        <fullName evidence="4">Toxin 2</fullName>
    </alternativeName>
</protein>
<organism>
    <name type="scientific">Conus fergusoni</name>
    <name type="common">Ferguson's cone</name>
    <dbReference type="NCBI Taxonomy" id="257326"/>
    <lineage>
        <taxon>Eukaryota</taxon>
        <taxon>Metazoa</taxon>
        <taxon>Spiralia</taxon>
        <taxon>Lophotrochozoa</taxon>
        <taxon>Mollusca</taxon>
        <taxon>Gastropoda</taxon>
        <taxon>Caenogastropoda</taxon>
        <taxon>Neogastropoda</taxon>
        <taxon>Conoidea</taxon>
        <taxon>Conidae</taxon>
        <taxon>Conus</taxon>
        <taxon>Pyruconus</taxon>
    </lineage>
</organism>
<name>CDKA2_CONFE</name>